<feature type="chain" id="PRO_0000154069" description="Flap endonuclease 1">
    <location>
        <begin position="1"/>
        <end position="380"/>
    </location>
</feature>
<feature type="region of interest" description="N-domain">
    <location>
        <begin position="1"/>
        <end position="104"/>
    </location>
</feature>
<feature type="region of interest" description="I-domain">
    <location>
        <begin position="122"/>
        <end position="253"/>
    </location>
</feature>
<feature type="region of interest" description="Disordered" evidence="2">
    <location>
        <begin position="327"/>
        <end position="380"/>
    </location>
</feature>
<feature type="region of interest" description="Interaction with PCNA" evidence="16">
    <location>
        <begin position="336"/>
        <end position="344"/>
    </location>
</feature>
<feature type="compositionally biased region" description="Basic residues" evidence="2">
    <location>
        <begin position="363"/>
        <end position="380"/>
    </location>
</feature>
<feature type="binding site" evidence="6 18">
    <location>
        <position position="34"/>
    </location>
    <ligand>
        <name>Mg(2+)</name>
        <dbReference type="ChEBI" id="CHEBI:18420"/>
        <label>1</label>
    </ligand>
</feature>
<feature type="binding site">
    <location>
        <position position="47"/>
    </location>
    <ligand>
        <name>DNA</name>
        <dbReference type="ChEBI" id="CHEBI:16991"/>
    </ligand>
</feature>
<feature type="binding site">
    <location>
        <position position="70"/>
    </location>
    <ligand>
        <name>DNA</name>
        <dbReference type="ChEBI" id="CHEBI:16991"/>
    </ligand>
</feature>
<feature type="binding site" evidence="6 18 19">
    <location>
        <position position="86"/>
    </location>
    <ligand>
        <name>Mg(2+)</name>
        <dbReference type="ChEBI" id="CHEBI:18420"/>
        <label>1</label>
    </ligand>
</feature>
<feature type="binding site">
    <location>
        <position position="158"/>
    </location>
    <ligand>
        <name>DNA</name>
        <dbReference type="ChEBI" id="CHEBI:16991"/>
    </ligand>
</feature>
<feature type="binding site" evidence="6 18 19">
    <location>
        <position position="158"/>
    </location>
    <ligand>
        <name>Mg(2+)</name>
        <dbReference type="ChEBI" id="CHEBI:18420"/>
        <label>1</label>
    </ligand>
</feature>
<feature type="binding site" evidence="6 18 19 20">
    <location>
        <position position="160"/>
    </location>
    <ligand>
        <name>Mg(2+)</name>
        <dbReference type="ChEBI" id="CHEBI:18420"/>
        <label>1</label>
    </ligand>
</feature>
<feature type="binding site" evidence="19 20">
    <location>
        <position position="179"/>
    </location>
    <ligand>
        <name>Mg(2+)</name>
        <dbReference type="ChEBI" id="CHEBI:18420"/>
        <label>2</label>
    </ligand>
</feature>
<feature type="binding site" evidence="6 18 19 20">
    <location>
        <position position="181"/>
    </location>
    <ligand>
        <name>Mg(2+)</name>
        <dbReference type="ChEBI" id="CHEBI:18420"/>
        <label>2</label>
    </ligand>
</feature>
<feature type="binding site">
    <location>
        <position position="231"/>
    </location>
    <ligand>
        <name>DNA</name>
        <dbReference type="ChEBI" id="CHEBI:16991"/>
    </ligand>
</feature>
<feature type="binding site">
    <location>
        <position position="233"/>
    </location>
    <ligand>
        <name>DNA</name>
        <dbReference type="ChEBI" id="CHEBI:16991"/>
    </ligand>
</feature>
<feature type="binding site" evidence="20">
    <location>
        <position position="233"/>
    </location>
    <ligand>
        <name>Mg(2+)</name>
        <dbReference type="ChEBI" id="CHEBI:18420"/>
        <label>2</label>
    </ligand>
</feature>
<feature type="modified residue" description="Symmetric dimethylarginine; by PRMT5" evidence="1 10">
    <location>
        <position position="19"/>
    </location>
</feature>
<feature type="modified residue" description="N6-acetyllysine" evidence="21">
    <location>
        <position position="80"/>
    </location>
</feature>
<feature type="modified residue" description="Symmetric dimethylarginine; by PRMT5" evidence="1 10">
    <location>
        <position position="100"/>
    </location>
</feature>
<feature type="modified residue" description="Symmetric dimethylarginine; by PRMT5" evidence="1 10">
    <location>
        <position position="104"/>
    </location>
</feature>
<feature type="modified residue" description="Phosphoserine; by CDK2" evidence="1 10">
    <location>
        <position position="187"/>
    </location>
</feature>
<feature type="modified residue" description="Symmetric dimethylarginine; by PRMT5" evidence="1 10">
    <location>
        <position position="192"/>
    </location>
</feature>
<feature type="modified residue" description="Phosphoserine" evidence="22">
    <location>
        <position position="197"/>
    </location>
</feature>
<feature type="modified residue" description="Phosphoserine" evidence="23">
    <location>
        <position position="255"/>
    </location>
</feature>
<feature type="modified residue" description="Phosphoserine" evidence="23">
    <location>
        <position position="293"/>
    </location>
</feature>
<feature type="modified residue" description="Phosphoserine" evidence="23">
    <location>
        <position position="335"/>
    </location>
</feature>
<feature type="modified residue" description="Phosphothreonine" evidence="23">
    <location>
        <position position="336"/>
    </location>
</feature>
<feature type="modified residue" description="N6-acetyllysine" evidence="1 4">
    <location>
        <position position="354"/>
    </location>
</feature>
<feature type="modified residue" description="Phosphothreonine" evidence="22">
    <location>
        <position position="364"/>
    </location>
</feature>
<feature type="modified residue" description="N6-acetyllysine" evidence="1 4 21">
    <location>
        <position position="375"/>
    </location>
</feature>
<feature type="modified residue" description="N6-acetyllysine" evidence="1 4">
    <location>
        <position position="377"/>
    </location>
</feature>
<feature type="modified residue" description="N6-acetyllysine" evidence="1 4">
    <location>
        <position position="380"/>
    </location>
</feature>
<feature type="splice variant" id="VSP_047520" description="In isoform FENMIT." evidence="17">
    <location>
        <begin position="1"/>
        <end position="64"/>
    </location>
</feature>
<feature type="mutagenesis site" description="No significant effect on exonuclease activity or flap endonuclease activity." evidence="5">
    <original>R</original>
    <variation>A</variation>
    <location>
        <position position="29"/>
    </location>
</feature>
<feature type="mutagenesis site" description="Loss of flap endonuclease activity but substrate binding activity is retained." evidence="15">
    <original>D</original>
    <variation>A</variation>
    <location>
        <position position="34"/>
    </location>
</feature>
<feature type="mutagenesis site" description="Significantly reduced exonuclease activity and reduced substrate binding. The positions of the cleavage sites are also shifted." evidence="5">
    <original>R</original>
    <variation>A</variation>
    <location>
        <position position="47"/>
    </location>
</feature>
<feature type="mutagenesis site" description="Loss of exonuclease activity and reduced endonuclease activity. Reduced substrate binding." evidence="5">
    <original>R</original>
    <variation>A</variation>
    <location>
        <position position="70"/>
    </location>
</feature>
<feature type="mutagenesis site" description="No significant effect on exonuclease activity or flap endonuclease activity." evidence="5">
    <original>R</original>
    <variation>A</variation>
    <location>
        <position position="73"/>
    </location>
</feature>
<feature type="mutagenesis site" description="No significant effect on exonuclease activity or flap endonuclease activity." evidence="5">
    <original>K</original>
    <variation>A</variation>
    <location>
        <position position="80"/>
    </location>
</feature>
<feature type="mutagenesis site" description="Loss of flap endonuclease activity but substrate binding activity is retained." evidence="15">
    <original>D</original>
    <variation>A</variation>
    <location>
        <position position="86"/>
    </location>
</feature>
<feature type="mutagenesis site" description="No effect on flap endonuclease activity or substrate binding." evidence="15">
    <original>R</original>
    <variation>A</variation>
    <location>
        <position position="103"/>
    </location>
</feature>
<feature type="mutagenesis site" description="Loss of flap endonuclease activity and substrate binding." evidence="15">
    <original>E</original>
    <variation>A</variation>
    <location>
        <position position="158"/>
    </location>
</feature>
<feature type="mutagenesis site" description="No effect on flap endonuclease activity or substrate binding." evidence="15">
    <original>D</original>
    <variation>A</variation>
    <location>
        <position position="179"/>
    </location>
</feature>
<feature type="mutagenesis site" description="Loss of flap endonuclease activity but substrate binding activity is retained." evidence="15">
    <original>D</original>
    <variation>A</variation>
    <location>
        <position position="181"/>
    </location>
</feature>
<feature type="mutagenesis site" description="Fails to translocate from nucleoli to the nuclear plasma." evidence="7">
    <original>S</original>
    <variation>A</variation>
    <location>
        <position position="187"/>
    </location>
</feature>
<feature type="mutagenesis site" description="Diminishes nucleolar localization." evidence="7">
    <original>S</original>
    <variation>D</variation>
    <location>
        <position position="187"/>
    </location>
</feature>
<feature type="mutagenesis site" description="Impairs ability to localize to sites of DNA replication or repair." evidence="10">
    <original>R</original>
    <variation>K</variation>
    <location>
        <position position="192"/>
    </location>
</feature>
<feature type="mutagenesis site" description="Loss of flap endonuclease activity and substrate binding." evidence="15">
    <original>G</original>
    <variation>A</variation>
    <location>
        <position position="231"/>
    </location>
</feature>
<feature type="mutagenesis site" description="Loss of flap endonuclease activity and substrate binding." evidence="15">
    <original>D</original>
    <variation>A</variation>
    <location>
        <position position="233"/>
    </location>
</feature>
<feature type="helix" evidence="27">
    <location>
        <begin position="6"/>
        <end position="13"/>
    </location>
</feature>
<feature type="helix" evidence="27">
    <location>
        <begin position="15"/>
        <end position="17"/>
    </location>
</feature>
<feature type="strand" evidence="27">
    <location>
        <begin position="18"/>
        <end position="21"/>
    </location>
</feature>
<feature type="helix" evidence="27">
    <location>
        <begin position="23"/>
        <end position="26"/>
    </location>
</feature>
<feature type="strand" evidence="27">
    <location>
        <begin position="30"/>
        <end position="34"/>
    </location>
</feature>
<feature type="turn" evidence="27">
    <location>
        <begin position="35"/>
        <end position="37"/>
    </location>
</feature>
<feature type="strand" evidence="28">
    <location>
        <begin position="46"/>
        <end position="48"/>
    </location>
</feature>
<feature type="helix" evidence="27">
    <location>
        <begin position="64"/>
        <end position="76"/>
    </location>
</feature>
<feature type="strand" evidence="27">
    <location>
        <begin position="80"/>
        <end position="85"/>
    </location>
</feature>
<feature type="helix" evidence="26">
    <location>
        <begin position="91"/>
        <end position="93"/>
    </location>
</feature>
<feature type="helix" evidence="26">
    <location>
        <begin position="94"/>
        <end position="116"/>
    </location>
</feature>
<feature type="strand" evidence="26">
    <location>
        <begin position="120"/>
        <end position="122"/>
    </location>
</feature>
<feature type="helix" evidence="26">
    <location>
        <begin position="123"/>
        <end position="129"/>
    </location>
</feature>
<feature type="helix" evidence="27">
    <location>
        <begin position="139"/>
        <end position="148"/>
    </location>
</feature>
<feature type="strand" evidence="27">
    <location>
        <begin position="152"/>
        <end position="154"/>
    </location>
</feature>
<feature type="helix" evidence="27">
    <location>
        <begin position="159"/>
        <end position="168"/>
    </location>
</feature>
<feature type="strand" evidence="27">
    <location>
        <begin position="171"/>
        <end position="176"/>
    </location>
</feature>
<feature type="helix" evidence="27">
    <location>
        <begin position="181"/>
        <end position="184"/>
    </location>
</feature>
<feature type="strand" evidence="27">
    <location>
        <begin position="188"/>
        <end position="193"/>
    </location>
</feature>
<feature type="helix" evidence="27">
    <location>
        <begin position="198"/>
        <end position="200"/>
    </location>
</feature>
<feature type="strand" evidence="27">
    <location>
        <begin position="204"/>
        <end position="208"/>
    </location>
</feature>
<feature type="helix" evidence="27">
    <location>
        <begin position="209"/>
        <end position="216"/>
    </location>
</feature>
<feature type="helix" evidence="27">
    <location>
        <begin position="220"/>
        <end position="230"/>
    </location>
</feature>
<feature type="strand" evidence="27">
    <location>
        <begin position="232"/>
        <end position="235"/>
    </location>
</feature>
<feature type="helix" evidence="27">
    <location>
        <begin position="243"/>
        <end position="253"/>
    </location>
</feature>
<feature type="helix" evidence="27">
    <location>
        <begin position="256"/>
        <end position="262"/>
    </location>
</feature>
<feature type="turn" evidence="27">
    <location>
        <begin position="265"/>
        <end position="267"/>
    </location>
</feature>
<feature type="helix" evidence="27">
    <location>
        <begin position="276"/>
        <end position="284"/>
    </location>
</feature>
<feature type="turn" evidence="28">
    <location>
        <begin position="291"/>
        <end position="293"/>
    </location>
</feature>
<feature type="helix" evidence="27">
    <location>
        <begin position="303"/>
        <end position="311"/>
    </location>
</feature>
<feature type="turn" evidence="27">
    <location>
        <begin position="312"/>
        <end position="314"/>
    </location>
</feature>
<feature type="helix" evidence="27">
    <location>
        <begin position="318"/>
        <end position="330"/>
    </location>
</feature>
<feature type="helix" evidence="24">
    <location>
        <begin position="340"/>
        <end position="342"/>
    </location>
</feature>
<feature type="strand" evidence="25">
    <location>
        <begin position="344"/>
        <end position="351"/>
    </location>
</feature>
<proteinExistence type="evidence at protein level"/>
<keyword id="KW-0002">3D-structure</keyword>
<keyword id="KW-0007">Acetylation</keyword>
<keyword id="KW-0024">Alternative initiation</keyword>
<keyword id="KW-0903">Direct protein sequencing</keyword>
<keyword id="KW-0227">DNA damage</keyword>
<keyword id="KW-0234">DNA repair</keyword>
<keyword id="KW-0235">DNA replication</keyword>
<keyword id="KW-0255">Endonuclease</keyword>
<keyword id="KW-0269">Exonuclease</keyword>
<keyword id="KW-0378">Hydrolase</keyword>
<keyword id="KW-0460">Magnesium</keyword>
<keyword id="KW-0479">Metal-binding</keyword>
<keyword id="KW-0488">Methylation</keyword>
<keyword id="KW-0496">Mitochondrion</keyword>
<keyword id="KW-0540">Nuclease</keyword>
<keyword id="KW-0539">Nucleus</keyword>
<keyword id="KW-0597">Phosphoprotein</keyword>
<keyword id="KW-1267">Proteomics identification</keyword>
<keyword id="KW-1185">Reference proteome</keyword>
<sequence length="380" mass="42593">MGIQGLAKLIADVAPSAIRENDIKSYFGRKVAIDASMSIYQFLIAVRQGGDVLQNEEGETTSHLMGMFYRTIRMMENGIKPVYVFDGKPPQLKSGELAKRSERRAEAEKQLQQAQAAGAEQEVEKFTKRLVKVTKQHNDECKHLLSLMGIPYLDAPSEAEASCAALVKAGKVYAAATEDMDCLTFGSPVLMRHLTASEAKKLPIQEFHLSRILQELGLNQEQFVDLCILLGSDYCESIRGIGPKRAVDLIQKHKSIEEIVRRLDPNKYPVPENWLHKEAHQLFLEPEVLDPESVELKWSEPNEEELIKFMCGEKQFSEERIRSGVKRLSKSRQGSTQGRLDDFFKVTGSLSSAKRKEPEPKGSTKKKAKTGAAGKFKRGK</sequence>
<dbReference type="EC" id="3.1.-.-" evidence="1"/>
<dbReference type="EMBL" id="X76771">
    <property type="protein sequence ID" value="CAA54166.1"/>
    <property type="molecule type" value="mRNA"/>
</dbReference>
<dbReference type="EMBL" id="L37374">
    <property type="protein sequence ID" value="AAA91331.1"/>
    <property type="molecule type" value="mRNA"/>
</dbReference>
<dbReference type="EMBL" id="AF523117">
    <property type="protein sequence ID" value="AAM74238.1"/>
    <property type="molecule type" value="Genomic_DNA"/>
</dbReference>
<dbReference type="EMBL" id="AC004770">
    <property type="protein sequence ID" value="AAC23394.1"/>
    <property type="molecule type" value="Genomic_DNA"/>
</dbReference>
<dbReference type="EMBL" id="BC000323">
    <property type="protein sequence ID" value="AAH00323.1"/>
    <property type="molecule type" value="mRNA"/>
</dbReference>
<dbReference type="CCDS" id="CCDS8010.1">
    <molecule id="P39748-1"/>
</dbReference>
<dbReference type="PIR" id="A56531">
    <property type="entry name" value="A56531"/>
</dbReference>
<dbReference type="RefSeq" id="NP_004102.1">
    <molecule id="P39748-1"/>
    <property type="nucleotide sequence ID" value="NM_004111.6"/>
</dbReference>
<dbReference type="PDB" id="1U7B">
    <property type="method" value="X-ray"/>
    <property type="resolution" value="1.88 A"/>
    <property type="chains" value="B=331-350"/>
</dbReference>
<dbReference type="PDB" id="1UL1">
    <property type="method" value="X-ray"/>
    <property type="resolution" value="2.90 A"/>
    <property type="chains" value="X/Y/Z=2-380"/>
</dbReference>
<dbReference type="PDB" id="3Q8K">
    <property type="method" value="X-ray"/>
    <property type="resolution" value="2.20 A"/>
    <property type="chains" value="A=2-336"/>
</dbReference>
<dbReference type="PDB" id="3Q8L">
    <property type="method" value="X-ray"/>
    <property type="resolution" value="2.32 A"/>
    <property type="chains" value="A=2-336"/>
</dbReference>
<dbReference type="PDB" id="3Q8M">
    <property type="method" value="X-ray"/>
    <property type="resolution" value="2.60 A"/>
    <property type="chains" value="A/B=2-336"/>
</dbReference>
<dbReference type="PDB" id="3UVU">
    <property type="method" value="X-ray"/>
    <property type="resolution" value="2.38 A"/>
    <property type="chains" value="B=352-370"/>
</dbReference>
<dbReference type="PDB" id="5E0V">
    <property type="method" value="X-ray"/>
    <property type="resolution" value="2.07 A"/>
    <property type="chains" value="C/D=335-350"/>
</dbReference>
<dbReference type="PDB" id="5FV7">
    <property type="method" value="X-ray"/>
    <property type="resolution" value="2.84 A"/>
    <property type="chains" value="A/B=1-336"/>
</dbReference>
<dbReference type="PDB" id="5K97">
    <property type="method" value="X-ray"/>
    <property type="resolution" value="2.10 A"/>
    <property type="chains" value="A=2-336"/>
</dbReference>
<dbReference type="PDB" id="5KSE">
    <property type="method" value="X-ray"/>
    <property type="resolution" value="2.10 A"/>
    <property type="chains" value="A=2-336"/>
</dbReference>
<dbReference type="PDB" id="5UM9">
    <property type="method" value="X-ray"/>
    <property type="resolution" value="2.81 A"/>
    <property type="chains" value="A=2-336"/>
</dbReference>
<dbReference type="PDB" id="5ZOD">
    <property type="method" value="X-ray"/>
    <property type="resolution" value="1.90 A"/>
    <property type="chains" value="A=1-333"/>
</dbReference>
<dbReference type="PDB" id="5ZOE">
    <property type="method" value="X-ray"/>
    <property type="resolution" value="1.95 A"/>
    <property type="chains" value="A=1-333"/>
</dbReference>
<dbReference type="PDB" id="5ZOF">
    <property type="method" value="X-ray"/>
    <property type="resolution" value="2.25 A"/>
    <property type="chains" value="A=1-333"/>
</dbReference>
<dbReference type="PDB" id="5ZOG">
    <property type="method" value="X-ray"/>
    <property type="resolution" value="2.30 A"/>
    <property type="chains" value="A=1-333"/>
</dbReference>
<dbReference type="PDB" id="6TNZ">
    <property type="method" value="EM"/>
    <property type="resolution" value="4.05 A"/>
    <property type="chains" value="H=1-380"/>
</dbReference>
<dbReference type="PDB" id="7QO1">
    <property type="method" value="EM"/>
    <property type="resolution" value="4.40 A"/>
    <property type="chains" value="Y=1-380"/>
</dbReference>
<dbReference type="PDB" id="8YJH">
    <property type="method" value="EM"/>
    <property type="resolution" value="3.68 A"/>
    <property type="chains" value="D=1-380"/>
</dbReference>
<dbReference type="PDB" id="8YJL">
    <property type="method" value="EM"/>
    <property type="resolution" value="3.51 A"/>
    <property type="chains" value="D=1-380"/>
</dbReference>
<dbReference type="PDB" id="8YJQ">
    <property type="method" value="EM"/>
    <property type="resolution" value="3.51 A"/>
    <property type="chains" value="D=1-380"/>
</dbReference>
<dbReference type="PDB" id="8YJR">
    <property type="method" value="EM"/>
    <property type="resolution" value="3.51 A"/>
    <property type="chains" value="D=1-380"/>
</dbReference>
<dbReference type="PDB" id="8YJS">
    <property type="method" value="EM"/>
    <property type="resolution" value="3.55 A"/>
    <property type="chains" value="D=1-380"/>
</dbReference>
<dbReference type="PDB" id="8YJU">
    <property type="method" value="EM"/>
    <property type="resolution" value="3.78 A"/>
    <property type="chains" value="D=1-380"/>
</dbReference>
<dbReference type="PDB" id="8YJV">
    <property type="method" value="EM"/>
    <property type="resolution" value="3.51 A"/>
    <property type="chains" value="D=1-380"/>
</dbReference>
<dbReference type="PDB" id="8YJW">
    <property type="method" value="EM"/>
    <property type="resolution" value="3.55 A"/>
    <property type="chains" value="D=1-380"/>
</dbReference>
<dbReference type="PDB" id="8YJZ">
    <property type="method" value="EM"/>
    <property type="resolution" value="5.15 A"/>
    <property type="chains" value="D=1-380"/>
</dbReference>
<dbReference type="PDBsum" id="1U7B"/>
<dbReference type="PDBsum" id="1UL1"/>
<dbReference type="PDBsum" id="3Q8K"/>
<dbReference type="PDBsum" id="3Q8L"/>
<dbReference type="PDBsum" id="3Q8M"/>
<dbReference type="PDBsum" id="3UVU"/>
<dbReference type="PDBsum" id="5E0V"/>
<dbReference type="PDBsum" id="5FV7"/>
<dbReference type="PDBsum" id="5K97"/>
<dbReference type="PDBsum" id="5KSE"/>
<dbReference type="PDBsum" id="5UM9"/>
<dbReference type="PDBsum" id="5ZOD"/>
<dbReference type="PDBsum" id="5ZOE"/>
<dbReference type="PDBsum" id="5ZOF"/>
<dbReference type="PDBsum" id="5ZOG"/>
<dbReference type="PDBsum" id="6TNZ"/>
<dbReference type="PDBsum" id="7QO1"/>
<dbReference type="PDBsum" id="8YJH"/>
<dbReference type="PDBsum" id="8YJL"/>
<dbReference type="PDBsum" id="8YJQ"/>
<dbReference type="PDBsum" id="8YJR"/>
<dbReference type="PDBsum" id="8YJS"/>
<dbReference type="PDBsum" id="8YJU"/>
<dbReference type="PDBsum" id="8YJV"/>
<dbReference type="PDBsum" id="8YJW"/>
<dbReference type="PDBsum" id="8YJZ"/>
<dbReference type="EMDB" id="EMD-10540"/>
<dbReference type="EMDB" id="EMD-14080"/>
<dbReference type="EMDB" id="EMD-15385"/>
<dbReference type="EMDB" id="EMD-39342"/>
<dbReference type="EMDB" id="EMD-39344"/>
<dbReference type="EMDB" id="EMD-39346"/>
<dbReference type="EMDB" id="EMD-39347"/>
<dbReference type="EMDB" id="EMD-39348"/>
<dbReference type="EMDB" id="EMD-39350"/>
<dbReference type="EMDB" id="EMD-39351"/>
<dbReference type="EMDB" id="EMD-39352"/>
<dbReference type="EMDB" id="EMD-39354"/>
<dbReference type="SMR" id="P39748"/>
<dbReference type="BioGRID" id="108528">
    <property type="interactions" value="215"/>
</dbReference>
<dbReference type="CORUM" id="P39748"/>
<dbReference type="DIP" id="DIP-24216N"/>
<dbReference type="ELM" id="P39748"/>
<dbReference type="FunCoup" id="P39748">
    <property type="interactions" value="2759"/>
</dbReference>
<dbReference type="IntAct" id="P39748">
    <property type="interactions" value="78"/>
</dbReference>
<dbReference type="MINT" id="P39748"/>
<dbReference type="STRING" id="9606.ENSP00000305480"/>
<dbReference type="BindingDB" id="P39748"/>
<dbReference type="ChEMBL" id="CHEMBL5027"/>
<dbReference type="DrugBank" id="DB14490">
    <property type="generic name" value="Ferrous ascorbate"/>
</dbReference>
<dbReference type="DrugBank" id="DB14491">
    <property type="generic name" value="Ferrous fumarate"/>
</dbReference>
<dbReference type="DrugBank" id="DB14488">
    <property type="generic name" value="Ferrous gluconate"/>
</dbReference>
<dbReference type="DrugBank" id="DB14501">
    <property type="generic name" value="Ferrous glycine sulfate"/>
</dbReference>
<dbReference type="DrugBank" id="DB14489">
    <property type="generic name" value="Ferrous succinate"/>
</dbReference>
<dbReference type="DrugBank" id="DB01592">
    <property type="generic name" value="Iron"/>
</dbReference>
<dbReference type="GlyGen" id="P39748">
    <property type="glycosylation" value="2 sites, 1 O-linked glycan (2 sites)"/>
</dbReference>
<dbReference type="iPTMnet" id="P39748"/>
<dbReference type="MetOSite" id="P39748"/>
<dbReference type="PhosphoSitePlus" id="P39748"/>
<dbReference type="SwissPalm" id="P39748"/>
<dbReference type="BioMuta" id="FEN1"/>
<dbReference type="DMDM" id="729475"/>
<dbReference type="CPTAC" id="CPTAC-1409"/>
<dbReference type="CPTAC" id="CPTAC-1410"/>
<dbReference type="CPTAC" id="CPTAC-1411"/>
<dbReference type="CPTAC" id="CPTAC-3230"/>
<dbReference type="CPTAC" id="CPTAC-700"/>
<dbReference type="jPOST" id="P39748"/>
<dbReference type="MassIVE" id="P39748"/>
<dbReference type="PaxDb" id="9606-ENSP00000305480"/>
<dbReference type="PeptideAtlas" id="P39748"/>
<dbReference type="ProteomicsDB" id="55319">
    <molecule id="P39748-1"/>
</dbReference>
<dbReference type="Pumba" id="P39748"/>
<dbReference type="TopDownProteomics" id="P39748-1">
    <molecule id="P39748-1"/>
</dbReference>
<dbReference type="ABCD" id="P39748">
    <property type="antibodies" value="1 sequenced antibody"/>
</dbReference>
<dbReference type="Antibodypedia" id="1878">
    <property type="antibodies" value="612 antibodies from 40 providers"/>
</dbReference>
<dbReference type="CPTC" id="P39748">
    <property type="antibodies" value="1 antibody"/>
</dbReference>
<dbReference type="DNASU" id="2237"/>
<dbReference type="Ensembl" id="ENST00000305885.3">
    <molecule id="P39748-1"/>
    <property type="protein sequence ID" value="ENSP00000305480.2"/>
    <property type="gene ID" value="ENSG00000168496.4"/>
</dbReference>
<dbReference type="GeneID" id="2237"/>
<dbReference type="KEGG" id="hsa:2237"/>
<dbReference type="MANE-Select" id="ENST00000305885.3">
    <property type="protein sequence ID" value="ENSP00000305480.2"/>
    <property type="RefSeq nucleotide sequence ID" value="NM_004111.6"/>
    <property type="RefSeq protein sequence ID" value="NP_004102.1"/>
</dbReference>
<dbReference type="AGR" id="HGNC:3650"/>
<dbReference type="CTD" id="2237"/>
<dbReference type="DisGeNET" id="2237"/>
<dbReference type="GeneCards" id="FEN1"/>
<dbReference type="HGNC" id="HGNC:3650">
    <property type="gene designation" value="FEN1"/>
</dbReference>
<dbReference type="HPA" id="ENSG00000168496">
    <property type="expression patterns" value="Tissue enhanced (lymphoid)"/>
</dbReference>
<dbReference type="MIM" id="600393">
    <property type="type" value="gene"/>
</dbReference>
<dbReference type="neXtProt" id="NX_P39748"/>
<dbReference type="OpenTargets" id="ENSG00000168496"/>
<dbReference type="PharmGKB" id="PA28090"/>
<dbReference type="VEuPathDB" id="HostDB:ENSG00000168496"/>
<dbReference type="eggNOG" id="KOG2519">
    <property type="taxonomic scope" value="Eukaryota"/>
</dbReference>
<dbReference type="GeneTree" id="ENSGT00940000155807"/>
<dbReference type="HOGENOM" id="CLU_032444_2_0_1"/>
<dbReference type="InParanoid" id="P39748"/>
<dbReference type="OMA" id="MGIPWVQ"/>
<dbReference type="OrthoDB" id="1937206at2759"/>
<dbReference type="PAN-GO" id="P39748">
    <property type="GO annotations" value="6 GO annotations based on evolutionary models"/>
</dbReference>
<dbReference type="PhylomeDB" id="P39748"/>
<dbReference type="TreeFam" id="TF105701"/>
<dbReference type="BRENDA" id="3.1.99.B1">
    <property type="organism ID" value="2681"/>
</dbReference>
<dbReference type="PathwayCommons" id="P39748"/>
<dbReference type="Reactome" id="R-HSA-110362">
    <property type="pathway name" value="POLB-Dependent Long Patch Base Excision Repair"/>
</dbReference>
<dbReference type="Reactome" id="R-HSA-162594">
    <property type="pathway name" value="Early Phase of HIV Life Cycle"/>
</dbReference>
<dbReference type="Reactome" id="R-HSA-174437">
    <property type="pathway name" value="Removal of the Flap Intermediate from the C-strand"/>
</dbReference>
<dbReference type="Reactome" id="R-HSA-5651801">
    <property type="pathway name" value="PCNA-Dependent Long Patch Base Excision Repair"/>
</dbReference>
<dbReference type="Reactome" id="R-HSA-5685939">
    <property type="pathway name" value="HDR through MMEJ (alt-NHEJ)"/>
</dbReference>
<dbReference type="Reactome" id="R-HSA-69166">
    <property type="pathway name" value="Removal of the Flap Intermediate"/>
</dbReference>
<dbReference type="SignaLink" id="P39748"/>
<dbReference type="SIGNOR" id="P39748"/>
<dbReference type="BioGRID-ORCS" id="2237">
    <property type="hits" value="542 hits in 1165 CRISPR screens"/>
</dbReference>
<dbReference type="CD-CODE" id="232F8A39">
    <property type="entry name" value="P-body"/>
</dbReference>
<dbReference type="CD-CODE" id="91857CE7">
    <property type="entry name" value="Nucleolus"/>
</dbReference>
<dbReference type="ChiTaRS" id="FEN1">
    <property type="organism name" value="human"/>
</dbReference>
<dbReference type="EvolutionaryTrace" id="P39748"/>
<dbReference type="GeneWiki" id="Flap_structure-specific_endonuclease_1"/>
<dbReference type="GenomeRNAi" id="2237"/>
<dbReference type="Pharos" id="P39748">
    <property type="development level" value="Tchem"/>
</dbReference>
<dbReference type="PRO" id="PR:P39748"/>
<dbReference type="Proteomes" id="UP000005640">
    <property type="component" value="Chromosome 11"/>
</dbReference>
<dbReference type="RNAct" id="P39748">
    <property type="molecule type" value="protein"/>
</dbReference>
<dbReference type="Bgee" id="ENSG00000168496">
    <property type="expression patterns" value="Expressed in endometrium epithelium and 193 other cell types or tissues"/>
</dbReference>
<dbReference type="ExpressionAtlas" id="P39748">
    <property type="expression patterns" value="baseline and differential"/>
</dbReference>
<dbReference type="GO" id="GO:0000781">
    <property type="term" value="C:chromosome, telomeric region"/>
    <property type="evidence" value="ECO:0007005"/>
    <property type="project" value="BHF-UCL"/>
</dbReference>
<dbReference type="GO" id="GO:0016020">
    <property type="term" value="C:membrane"/>
    <property type="evidence" value="ECO:0007005"/>
    <property type="project" value="UniProtKB"/>
</dbReference>
<dbReference type="GO" id="GO:0005739">
    <property type="term" value="C:mitochondrion"/>
    <property type="evidence" value="ECO:0000314"/>
    <property type="project" value="UniProtKB"/>
</dbReference>
<dbReference type="GO" id="GO:0005730">
    <property type="term" value="C:nucleolus"/>
    <property type="evidence" value="ECO:0000314"/>
    <property type="project" value="HPA"/>
</dbReference>
<dbReference type="GO" id="GO:0005654">
    <property type="term" value="C:nucleoplasm"/>
    <property type="evidence" value="ECO:0000314"/>
    <property type="project" value="HPA"/>
</dbReference>
<dbReference type="GO" id="GO:0005634">
    <property type="term" value="C:nucleus"/>
    <property type="evidence" value="ECO:0000314"/>
    <property type="project" value="UniProtKB"/>
</dbReference>
<dbReference type="GO" id="GO:0032991">
    <property type="term" value="C:protein-containing complex"/>
    <property type="evidence" value="ECO:0000314"/>
    <property type="project" value="MGI"/>
</dbReference>
<dbReference type="GO" id="GO:0008409">
    <property type="term" value="F:5'-3' exonuclease activity"/>
    <property type="evidence" value="ECO:0000314"/>
    <property type="project" value="UniProtKB"/>
</dbReference>
<dbReference type="GO" id="GO:0017108">
    <property type="term" value="F:5'-flap endonuclease activity"/>
    <property type="evidence" value="ECO:0000314"/>
    <property type="project" value="UniProtKB"/>
</dbReference>
<dbReference type="GO" id="GO:0003684">
    <property type="term" value="F:damaged DNA binding"/>
    <property type="evidence" value="ECO:0000304"/>
    <property type="project" value="ProtInc"/>
</dbReference>
<dbReference type="GO" id="GO:0003677">
    <property type="term" value="F:DNA binding"/>
    <property type="evidence" value="ECO:0000315"/>
    <property type="project" value="UniProtKB"/>
</dbReference>
<dbReference type="GO" id="GO:0003690">
    <property type="term" value="F:double-stranded DNA binding"/>
    <property type="evidence" value="ECO:0000304"/>
    <property type="project" value="ProtInc"/>
</dbReference>
<dbReference type="GO" id="GO:0008309">
    <property type="term" value="F:double-stranded DNA exodeoxyribonuclease activity"/>
    <property type="evidence" value="ECO:0000304"/>
    <property type="project" value="ProtInc"/>
</dbReference>
<dbReference type="GO" id="GO:0004519">
    <property type="term" value="F:endonuclease activity"/>
    <property type="evidence" value="ECO:0000304"/>
    <property type="project" value="ProtInc"/>
</dbReference>
<dbReference type="GO" id="GO:0004527">
    <property type="term" value="F:exonuclease activity"/>
    <property type="evidence" value="ECO:0000304"/>
    <property type="project" value="ProtInc"/>
</dbReference>
<dbReference type="GO" id="GO:0048256">
    <property type="term" value="F:flap endonuclease activity"/>
    <property type="evidence" value="ECO:0000314"/>
    <property type="project" value="UniProtKB"/>
</dbReference>
<dbReference type="GO" id="GO:0000287">
    <property type="term" value="F:magnesium ion binding"/>
    <property type="evidence" value="ECO:0000318"/>
    <property type="project" value="GO_Central"/>
</dbReference>
<dbReference type="GO" id="GO:0030145">
    <property type="term" value="F:manganese ion binding"/>
    <property type="evidence" value="ECO:0000318"/>
    <property type="project" value="GO_Central"/>
</dbReference>
<dbReference type="GO" id="GO:0004523">
    <property type="term" value="F:RNA-DNA hybrid ribonuclease activity"/>
    <property type="evidence" value="ECO:0000314"/>
    <property type="project" value="UniProtKB"/>
</dbReference>
<dbReference type="GO" id="GO:0006287">
    <property type="term" value="P:base-excision repair, gap-filling"/>
    <property type="evidence" value="ECO:0000304"/>
    <property type="project" value="Reactome"/>
</dbReference>
<dbReference type="GO" id="GO:0006281">
    <property type="term" value="P:DNA repair"/>
    <property type="evidence" value="ECO:0000304"/>
    <property type="project" value="ProtInc"/>
</dbReference>
<dbReference type="GO" id="GO:0006260">
    <property type="term" value="P:DNA replication"/>
    <property type="evidence" value="ECO:0000304"/>
    <property type="project" value="ProtInc"/>
</dbReference>
<dbReference type="GO" id="GO:0043137">
    <property type="term" value="P:DNA replication, removal of RNA primer"/>
    <property type="evidence" value="ECO:0000314"/>
    <property type="project" value="UniProtKB"/>
</dbReference>
<dbReference type="GO" id="GO:0006302">
    <property type="term" value="P:double-strand break repair"/>
    <property type="evidence" value="ECO:0000304"/>
    <property type="project" value="ProtInc"/>
</dbReference>
<dbReference type="GO" id="GO:0000724">
    <property type="term" value="P:double-strand break repair via homologous recombination"/>
    <property type="evidence" value="ECO:0000304"/>
    <property type="project" value="Reactome"/>
</dbReference>
<dbReference type="GO" id="GO:0007613">
    <property type="term" value="P:memory"/>
    <property type="evidence" value="ECO:0007669"/>
    <property type="project" value="Ensembl"/>
</dbReference>
<dbReference type="GO" id="GO:0045876">
    <property type="term" value="P:positive regulation of sister chromatid cohesion"/>
    <property type="evidence" value="ECO:0000315"/>
    <property type="project" value="UniProtKB"/>
</dbReference>
<dbReference type="GO" id="GO:0032201">
    <property type="term" value="P:telomere maintenance via semi-conservative replication"/>
    <property type="evidence" value="ECO:0000304"/>
    <property type="project" value="Reactome"/>
</dbReference>
<dbReference type="GO" id="GO:0009650">
    <property type="term" value="P:UV protection"/>
    <property type="evidence" value="ECO:0000304"/>
    <property type="project" value="ProtInc"/>
</dbReference>
<dbReference type="CDD" id="cd09907">
    <property type="entry name" value="H3TH_FEN1-Euk"/>
    <property type="match status" value="1"/>
</dbReference>
<dbReference type="CDD" id="cd09867">
    <property type="entry name" value="PIN_FEN1"/>
    <property type="match status" value="1"/>
</dbReference>
<dbReference type="DisProt" id="DP01974"/>
<dbReference type="FunFam" id="1.10.150.20:FF:000009">
    <property type="entry name" value="Flap endonuclease 1"/>
    <property type="match status" value="1"/>
</dbReference>
<dbReference type="FunFam" id="3.40.50.1010:FF:000003">
    <property type="entry name" value="Flap endonuclease 1"/>
    <property type="match status" value="1"/>
</dbReference>
<dbReference type="Gene3D" id="1.10.150.20">
    <property type="entry name" value="5' to 3' exonuclease, C-terminal subdomain"/>
    <property type="match status" value="1"/>
</dbReference>
<dbReference type="Gene3D" id="3.40.50.1010">
    <property type="entry name" value="5'-nuclease"/>
    <property type="match status" value="1"/>
</dbReference>
<dbReference type="HAMAP" id="MF_00614">
    <property type="entry name" value="Fen"/>
    <property type="match status" value="1"/>
</dbReference>
<dbReference type="IDEAL" id="IID00044"/>
<dbReference type="InterPro" id="IPR036279">
    <property type="entry name" value="5-3_exonuclease_C_sf"/>
</dbReference>
<dbReference type="InterPro" id="IPR023426">
    <property type="entry name" value="Flap_endonuc"/>
</dbReference>
<dbReference type="InterPro" id="IPR008918">
    <property type="entry name" value="HhH2"/>
</dbReference>
<dbReference type="InterPro" id="IPR029060">
    <property type="entry name" value="PIN-like_dom_sf"/>
</dbReference>
<dbReference type="InterPro" id="IPR006086">
    <property type="entry name" value="XPG-I_dom"/>
</dbReference>
<dbReference type="InterPro" id="IPR006084">
    <property type="entry name" value="XPG/Rad2"/>
</dbReference>
<dbReference type="InterPro" id="IPR019974">
    <property type="entry name" value="XPG_CS"/>
</dbReference>
<dbReference type="InterPro" id="IPR006085">
    <property type="entry name" value="XPG_DNA_repair_N"/>
</dbReference>
<dbReference type="PANTHER" id="PTHR11081:SF58">
    <property type="entry name" value="FLAP ENDONUCLEASE 1"/>
    <property type="match status" value="1"/>
</dbReference>
<dbReference type="PANTHER" id="PTHR11081">
    <property type="entry name" value="FLAP ENDONUCLEASE FAMILY MEMBER"/>
    <property type="match status" value="1"/>
</dbReference>
<dbReference type="Pfam" id="PF00867">
    <property type="entry name" value="XPG_I"/>
    <property type="match status" value="1"/>
</dbReference>
<dbReference type="Pfam" id="PF00752">
    <property type="entry name" value="XPG_N"/>
    <property type="match status" value="1"/>
</dbReference>
<dbReference type="PRINTS" id="PR00853">
    <property type="entry name" value="XPGRADSUPER"/>
</dbReference>
<dbReference type="SMART" id="SM00279">
    <property type="entry name" value="HhH2"/>
    <property type="match status" value="1"/>
</dbReference>
<dbReference type="SMART" id="SM00484">
    <property type="entry name" value="XPGI"/>
    <property type="match status" value="1"/>
</dbReference>
<dbReference type="SMART" id="SM00485">
    <property type="entry name" value="XPGN"/>
    <property type="match status" value="1"/>
</dbReference>
<dbReference type="SUPFAM" id="SSF47807">
    <property type="entry name" value="5' to 3' exonuclease, C-terminal subdomain"/>
    <property type="match status" value="1"/>
</dbReference>
<dbReference type="SUPFAM" id="SSF88723">
    <property type="entry name" value="PIN domain-like"/>
    <property type="match status" value="1"/>
</dbReference>
<dbReference type="PROSITE" id="PS00841">
    <property type="entry name" value="XPG_1"/>
    <property type="match status" value="1"/>
</dbReference>
<dbReference type="PROSITE" id="PS00842">
    <property type="entry name" value="XPG_2"/>
    <property type="match status" value="1"/>
</dbReference>
<name>FEN1_HUMAN</name>
<organism>
    <name type="scientific">Homo sapiens</name>
    <name type="common">Human</name>
    <dbReference type="NCBI Taxonomy" id="9606"/>
    <lineage>
        <taxon>Eukaryota</taxon>
        <taxon>Metazoa</taxon>
        <taxon>Chordata</taxon>
        <taxon>Craniata</taxon>
        <taxon>Vertebrata</taxon>
        <taxon>Euteleostomi</taxon>
        <taxon>Mammalia</taxon>
        <taxon>Eutheria</taxon>
        <taxon>Euarchontoglires</taxon>
        <taxon>Primates</taxon>
        <taxon>Haplorrhini</taxon>
        <taxon>Catarrhini</taxon>
        <taxon>Hominidae</taxon>
        <taxon>Homo</taxon>
    </lineage>
</organism>
<protein>
    <recommendedName>
        <fullName evidence="1">Flap endonuclease 1</fullName>
        <shortName evidence="1">FEN-1</shortName>
        <ecNumber evidence="1">3.1.-.-</ecNumber>
    </recommendedName>
    <alternativeName>
        <fullName>DNase IV</fullName>
    </alternativeName>
    <alternativeName>
        <fullName evidence="1">Flap structure-specific endonuclease 1</fullName>
    </alternativeName>
    <alternativeName>
        <fullName>Maturation factor 1</fullName>
        <shortName>MF1</shortName>
        <shortName>hFEN-1</shortName>
    </alternativeName>
</protein>
<reference key="1">
    <citation type="journal article" date="1994" name="Mol. Cell. Biol.">
        <title>Structural and functional conservation of the human homolog of the Schizosaccharomyces pombe rad2 gene, which is required for chromosome segregation and recovery from DNA damage.</title>
        <authorList>
            <person name="Murray J.M."/>
            <person name="Tavassoli M."/>
            <person name="Al-Harithy R."/>
            <person name="Sheldrick K.S."/>
            <person name="Lehmann A.R."/>
            <person name="Carr A.M."/>
            <person name="Watts F.Z."/>
        </authorList>
    </citation>
    <scope>NUCLEOTIDE SEQUENCE [MRNA]</scope>
</reference>
<reference key="2">
    <citation type="journal article" date="1995" name="Genomics">
        <title>Sequence of human FEN-1, a structure-specific endonuclease, and chromosomal localization of the gene (FEN1) in mouse and human.</title>
        <authorList>
            <person name="Hiraoka L.R."/>
            <person name="Harrington J.J."/>
            <person name="Gerhard D.S."/>
            <person name="Lieber M.R."/>
            <person name="Hsieh C.-L."/>
        </authorList>
    </citation>
    <scope>NUCLEOTIDE SEQUENCE [MRNA]</scope>
    <source>
        <tissue>Leukemic T-cell</tissue>
    </source>
</reference>
<reference key="3">
    <citation type="submission" date="2002-06" db="EMBL/GenBank/DDBJ databases">
        <authorList>
            <consortium name="NIEHS SNPs program"/>
        </authorList>
    </citation>
    <scope>NUCLEOTIDE SEQUENCE [GENOMIC DNA]</scope>
</reference>
<reference key="4">
    <citation type="journal article" date="2006" name="Nature">
        <title>Human chromosome 11 DNA sequence and analysis including novel gene identification.</title>
        <authorList>
            <person name="Taylor T.D."/>
            <person name="Noguchi H."/>
            <person name="Totoki Y."/>
            <person name="Toyoda A."/>
            <person name="Kuroki Y."/>
            <person name="Dewar K."/>
            <person name="Lloyd C."/>
            <person name="Itoh T."/>
            <person name="Takeda T."/>
            <person name="Kim D.-W."/>
            <person name="She X."/>
            <person name="Barlow K.F."/>
            <person name="Bloom T."/>
            <person name="Bruford E."/>
            <person name="Chang J.L."/>
            <person name="Cuomo C.A."/>
            <person name="Eichler E."/>
            <person name="FitzGerald M.G."/>
            <person name="Jaffe D.B."/>
            <person name="LaButti K."/>
            <person name="Nicol R."/>
            <person name="Park H.-S."/>
            <person name="Seaman C."/>
            <person name="Sougnez C."/>
            <person name="Yang X."/>
            <person name="Zimmer A.R."/>
            <person name="Zody M.C."/>
            <person name="Birren B.W."/>
            <person name="Nusbaum C."/>
            <person name="Fujiyama A."/>
            <person name="Hattori M."/>
            <person name="Rogers J."/>
            <person name="Lander E.S."/>
            <person name="Sakaki Y."/>
        </authorList>
    </citation>
    <scope>NUCLEOTIDE SEQUENCE [LARGE SCALE GENOMIC DNA]</scope>
</reference>
<reference key="5">
    <citation type="journal article" date="2004" name="Genome Res.">
        <title>The status, quality, and expansion of the NIH full-length cDNA project: the Mammalian Gene Collection (MGC).</title>
        <authorList>
            <consortium name="The MGC Project Team"/>
        </authorList>
    </citation>
    <scope>NUCLEOTIDE SEQUENCE [LARGE SCALE MRNA]</scope>
    <source>
        <tissue>Lung</tissue>
    </source>
</reference>
<reference key="6">
    <citation type="journal article" date="1994" name="J. Biol. Chem.">
        <title>Structural and functional homology between mammalian DNase IV and the 5'-nuclease domain of Escherichia coli DNA polymerase I.</title>
        <authorList>
            <person name="Robins P."/>
            <person name="Pappin D.J.C."/>
            <person name="Wood R.D."/>
            <person name="Lindahl T."/>
        </authorList>
    </citation>
    <scope>PARTIAL PROTEIN SEQUENCE</scope>
    <scope>FUNCTION</scope>
    <scope>SUBCELLULAR LOCATION</scope>
</reference>
<reference key="7">
    <citation type="journal article" date="1996" name="J. Biol. Chem.">
        <title>Essential amino acids for substrate binding and catalysis of human flap endonuclease 1.</title>
        <authorList>
            <person name="Shen B."/>
            <person name="Nolan J.P."/>
            <person name="Sklar L.A."/>
            <person name="Park M.S."/>
        </authorList>
    </citation>
    <scope>FUNCTION</scope>
    <scope>CATALYTIC ACTIVITY</scope>
    <scope>SUBSTRATE-BINDING SITES</scope>
    <scope>MUTAGENESIS OF ASP-34; ASP-86; ARG-103; GLU-158; ASP-179; ASP-181; GLY-231 AND ASP-233</scope>
</reference>
<reference key="8">
    <citation type="journal article" date="1997" name="J. Biol. Chem.">
        <title>The DNA repair endonuclease XPG binds to proliferating cell nuclear antigen (PCNA) and shares sequence elements with the PCNA-binding regions of FEN-1 and cyclin-dependent kinase inhibitor p21.</title>
        <authorList>
            <person name="Gary R."/>
            <person name="Ludwig D.L."/>
            <person name="Cornelius H.L."/>
            <person name="MacInnes M.A."/>
            <person name="Park M.S."/>
        </authorList>
    </citation>
    <scope>INTERACTION WITH PCNA</scope>
</reference>
<reference key="9">
    <citation type="journal article" date="2000" name="J. Biol. Chem.">
        <title>Mechanism whereby proliferating cell nuclear antigen stimulates flap endonuclease 1.</title>
        <authorList>
            <person name="Tom S."/>
            <person name="Henricksen L.A."/>
            <person name="Bambara R.A."/>
        </authorList>
    </citation>
    <scope>FUNCTION</scope>
</reference>
<reference key="10">
    <citation type="journal article" date="2001" name="Mol. Cell">
        <title>Regulation of human flap endonuclease-1 activity by acetylation through the transcriptional coactivator p300.</title>
        <authorList>
            <person name="Hasan S."/>
            <person name="Stucki M."/>
            <person name="Hassa P.O."/>
            <person name="Imhof R."/>
            <person name="Gehrig P."/>
            <person name="Hunziker P."/>
            <person name="Hubscher U."/>
            <person name="Hottiger M.O."/>
        </authorList>
    </citation>
    <scope>INTERACTION WITH PCNA AND P300</scope>
    <scope>ACETYLATION AT LYS-354; LYS-375; LYS-377 AND LYS-380</scope>
</reference>
<reference key="11">
    <citation type="journal article" date="2002" name="J. Biol. Chem.">
        <title>Arginine residues 47 and 70 of human flap endonuclease-1 are involved in DNA substrate interactions and cleavage site determination.</title>
        <authorList>
            <person name="Qiu J."/>
            <person name="Bimston D.N."/>
            <person name="Partikian A."/>
            <person name="Shen B."/>
        </authorList>
    </citation>
    <scope>FUNCTION</scope>
    <scope>SUBSTRATE-BINDING SITES ARG-47 AND ARG-70</scope>
    <scope>MUTAGENESIS OF ARG-29; ARG-47; ARG-70; ARG-73 AND LYS-80</scope>
</reference>
<reference key="12">
    <citation type="journal article" date="2008" name="J. Biol. Chem.">
        <title>Studies with the human cohesin establishment factor, ChlR1. Association of ChlR1 with Ctf18-RFC and Fen1.</title>
        <authorList>
            <person name="Farina A."/>
            <person name="Shin J.H."/>
            <person name="Kim D.H."/>
            <person name="Bermudez V.P."/>
            <person name="Kelman Z."/>
            <person name="Seo Y.S."/>
            <person name="Hurwitz J."/>
        </authorList>
    </citation>
    <scope>INTERACTION WITH DDX11</scope>
</reference>
<reference key="13">
    <citation type="journal article" date="2008" name="Mol. Cell. Biol.">
        <title>Nucleolar localization and dynamic roles of flap endonuclease 1 in ribosomal DNA replication and damage repair.</title>
        <authorList>
            <person name="Guo Z."/>
            <person name="Qian L."/>
            <person name="Liu R."/>
            <person name="Dai H."/>
            <person name="Zhou M."/>
            <person name="Zheng L."/>
            <person name="Shen B."/>
        </authorList>
    </citation>
    <scope>FUNCTION</scope>
    <scope>SUBCELLULAR LOCATION</scope>
    <scope>PHOSPHORYLATION</scope>
    <scope>MUTAGENESIS OF SER-187</scope>
</reference>
<reference key="14">
    <citation type="journal article" date="2009" name="Nucleic Acids Res.">
        <title>Human DNA polymerase beta polymorphism, Arg137Gln, impairs its polymerase activity and interaction with PCNA and the cellular base excision repair capacity.</title>
        <authorList>
            <person name="Guo Z."/>
            <person name="Zheng L."/>
            <person name="Dai H."/>
            <person name="Zhou M."/>
            <person name="Xu H."/>
            <person name="Shen B."/>
        </authorList>
    </citation>
    <scope>INTERACTION WITH POLB</scope>
</reference>
<reference key="15">
    <citation type="journal article" date="2009" name="Science">
        <title>Lysine acetylation targets protein complexes and co-regulates major cellular functions.</title>
        <authorList>
            <person name="Choudhary C."/>
            <person name="Kumar C."/>
            <person name="Gnad F."/>
            <person name="Nielsen M.L."/>
            <person name="Rehman M."/>
            <person name="Walther T.C."/>
            <person name="Olsen J.V."/>
            <person name="Mann M."/>
        </authorList>
    </citation>
    <scope>ACETYLATION [LARGE SCALE ANALYSIS] AT LYS-80 AND LYS-375</scope>
    <scope>IDENTIFICATION BY MASS SPECTROMETRY [LARGE SCALE ANALYSIS]</scope>
</reference>
<reference key="16">
    <citation type="journal article" date="2010" name="Nat. Chem. Biol.">
        <title>Methylation of FEN1 suppresses nearby phosphorylation and facilitates PCNA binding.</title>
        <authorList>
            <person name="Guo Z."/>
            <person name="Zheng L."/>
            <person name="Xu H."/>
            <person name="Dai H."/>
            <person name="Zhou M."/>
            <person name="Pascua M.R."/>
            <person name="Chen Q.M."/>
            <person name="Shen B."/>
        </authorList>
    </citation>
    <scope>FUNCTION</scope>
    <scope>MUTAGENESIS OF ARG-192</scope>
    <scope>METHYLATION AT ARG-19; ARG-100; ARG-104 AND ARG-192</scope>
    <scope>PHOSPHORYLATION AT SER-187</scope>
</reference>
<reference key="17">
    <citation type="journal article" date="2010" name="Sci. Signal.">
        <title>Quantitative phosphoproteomics reveals widespread full phosphorylation site occupancy during mitosis.</title>
        <authorList>
            <person name="Olsen J.V."/>
            <person name="Vermeulen M."/>
            <person name="Santamaria A."/>
            <person name="Kumar C."/>
            <person name="Miller M.L."/>
            <person name="Jensen L.J."/>
            <person name="Gnad F."/>
            <person name="Cox J."/>
            <person name="Jensen T.S."/>
            <person name="Nigg E.A."/>
            <person name="Brunak S."/>
            <person name="Mann M."/>
        </authorList>
    </citation>
    <scope>PHOSPHORYLATION [LARGE SCALE ANALYSIS] AT SER-197 AND THR-364</scope>
    <scope>IDENTIFICATION BY MASS SPECTROMETRY [LARGE SCALE ANALYSIS]</scope>
    <source>
        <tissue>Cervix carcinoma</tissue>
    </source>
</reference>
<reference key="18">
    <citation type="journal article" date="2011" name="BMC Syst. Biol.">
        <title>Initial characterization of the human central proteome.</title>
        <authorList>
            <person name="Burkard T.R."/>
            <person name="Planyavsky M."/>
            <person name="Kaupe I."/>
            <person name="Breitwieser F.P."/>
            <person name="Buerckstuemmer T."/>
            <person name="Bennett K.L."/>
            <person name="Superti-Furga G."/>
            <person name="Colinge J."/>
        </authorList>
    </citation>
    <scope>IDENTIFICATION BY MASS SPECTROMETRY [LARGE SCALE ANALYSIS]</scope>
</reference>
<reference key="19">
    <citation type="journal article" date="2012" name="Proc. Natl. Acad. Sci. U.S.A.">
        <title>N-terminal acetylome analyses and functional insights of the N-terminal acetyltransferase NatB.</title>
        <authorList>
            <person name="Van Damme P."/>
            <person name="Lasa M."/>
            <person name="Polevoda B."/>
            <person name="Gazquez C."/>
            <person name="Elosegui-Artola A."/>
            <person name="Kim D.S."/>
            <person name="De Juan-Pardo E."/>
            <person name="Demeyer K."/>
            <person name="Hole K."/>
            <person name="Larrea E."/>
            <person name="Timmerman E."/>
            <person name="Prieto J."/>
            <person name="Arnesen T."/>
            <person name="Sherman F."/>
            <person name="Gevaert K."/>
            <person name="Aldabe R."/>
        </authorList>
    </citation>
    <scope>IDENTIFICATION BY MASS SPECTROMETRY [LARGE SCALE ANALYSIS]</scope>
</reference>
<reference key="20">
    <citation type="journal article" date="2013" name="J. Proteome Res.">
        <title>Toward a comprehensive characterization of a human cancer cell phosphoproteome.</title>
        <authorList>
            <person name="Zhou H."/>
            <person name="Di Palma S."/>
            <person name="Preisinger C."/>
            <person name="Peng M."/>
            <person name="Polat A.N."/>
            <person name="Heck A.J."/>
            <person name="Mohammed S."/>
        </authorList>
    </citation>
    <scope>PHOSPHORYLATION [LARGE SCALE ANALYSIS] AT SER-255; SER-293; SER-335 AND THR-336</scope>
    <scope>IDENTIFICATION BY MASS SPECTROMETRY [LARGE SCALE ANALYSIS]</scope>
    <source>
        <tissue>Cervix carcinoma</tissue>
        <tissue>Erythroleukemia</tissue>
    </source>
</reference>
<reference key="21">
    <citation type="journal article" date="2013" name="PLoS ONE">
        <title>A cryptic targeting signal creates a mitochondrial FEN1 isoform with tailed R-loop binding properties.</title>
        <authorList>
            <person name="Kazak L."/>
            <person name="Reyes A."/>
            <person name="He J."/>
            <person name="Wood S.R."/>
            <person name="Brea-Calvo G."/>
            <person name="Holen T.T."/>
            <person name="Holt I.J."/>
        </authorList>
    </citation>
    <scope>ALTERNATIVE INITIATION (ISOFORM FENMIT)</scope>
    <scope>SUBCELLULAR LOCATION (ISOFORM FENMIT)</scope>
</reference>
<reference key="22">
    <citation type="journal article" date="2014" name="J. Proteomics">
        <title>An enzyme assisted RP-RPLC approach for in-depth analysis of human liver phosphoproteome.</title>
        <authorList>
            <person name="Bian Y."/>
            <person name="Song C."/>
            <person name="Cheng K."/>
            <person name="Dong M."/>
            <person name="Wang F."/>
            <person name="Huang J."/>
            <person name="Sun D."/>
            <person name="Wang L."/>
            <person name="Ye M."/>
            <person name="Zou H."/>
        </authorList>
    </citation>
    <scope>IDENTIFICATION BY MASS SPECTROMETRY [LARGE SCALE ANALYSIS]</scope>
    <source>
        <tissue>Liver</tissue>
    </source>
</reference>
<reference key="23">
    <citation type="journal article" date="2016" name="Oncotarget">
        <title>R152C DNA Pol beta mutation impairs base excision repair and induces cellular transformation.</title>
        <authorList>
            <person name="Zhou T."/>
            <person name="Pan F."/>
            <person name="Cao Y."/>
            <person name="Han Y."/>
            <person name="Zhao J."/>
            <person name="Sun H."/>
            <person name="Zhou X."/>
            <person name="Wu X."/>
            <person name="He L."/>
            <person name="Hu Z."/>
            <person name="Chen H."/>
            <person name="Shen B."/>
            <person name="Guo Z."/>
        </authorList>
    </citation>
    <scope>INTERACTION WITH POLB</scope>
</reference>
<reference key="24">
    <citation type="journal article" date="2016" name="PLoS Biol.">
        <title>Wuho is a new member in maintaining genome stability through its interaction with flap endonuclease 1.</title>
        <authorList>
            <person name="Cheng I.C."/>
            <person name="Chen B.C."/>
            <person name="Shuai H.H."/>
            <person name="Chien F.C."/>
            <person name="Chen P."/>
            <person name="Hsieh T.S."/>
        </authorList>
    </citation>
    <scope>FUNCTION</scope>
    <scope>INTERACTION WITH WDR4</scope>
</reference>
<reference key="25">
    <citation type="journal article" date="2004" name="Structure">
        <title>Structural and thermodynamic analysis of human PCNA with peptides derived from DNA polymerase-delta p66 subunit and flap endonuclease-1.</title>
        <authorList>
            <person name="Bruning J.B."/>
            <person name="Shamoo Y."/>
        </authorList>
    </citation>
    <scope>X-RAY CRYSTALLOGRAPHY (1.88 ANGSTROMS) OF 331-350</scope>
</reference>
<reference key="26">
    <citation type="journal article" date="2005" name="EMBO J.">
        <title>Structural basis for recruitment of human flap endonuclease 1 to PCNA.</title>
        <authorList>
            <person name="Sakurai S."/>
            <person name="Kitano K."/>
            <person name="Yamaguchi H."/>
            <person name="Hamada K."/>
            <person name="Okada K."/>
            <person name="Fukuda K."/>
            <person name="Uchida M."/>
            <person name="Ohtsuka E."/>
            <person name="Morioka H."/>
            <person name="Hakoshima T."/>
        </authorList>
    </citation>
    <scope>X-RAY CRYSTALLOGRAPHY (2.90 ANGSTROMS) OF 2-380 IN COMPLEX WITH PCNA AND MAGNESIUM IONS</scope>
</reference>
<accession>P39748</accession>
<evidence type="ECO:0000255" key="1">
    <source>
        <dbReference type="HAMAP-Rule" id="MF_03140"/>
    </source>
</evidence>
<evidence type="ECO:0000256" key="2">
    <source>
        <dbReference type="SAM" id="MobiDB-lite"/>
    </source>
</evidence>
<evidence type="ECO:0000269" key="3">
    <source>
    </source>
</evidence>
<evidence type="ECO:0000269" key="4">
    <source>
    </source>
</evidence>
<evidence type="ECO:0000269" key="5">
    <source>
    </source>
</evidence>
<evidence type="ECO:0000269" key="6">
    <source>
    </source>
</evidence>
<evidence type="ECO:0000269" key="7">
    <source>
    </source>
</evidence>
<evidence type="ECO:0000269" key="8">
    <source>
    </source>
</evidence>
<evidence type="ECO:0000269" key="9">
    <source>
    </source>
</evidence>
<evidence type="ECO:0000269" key="10">
    <source>
    </source>
</evidence>
<evidence type="ECO:0000269" key="11">
    <source>
    </source>
</evidence>
<evidence type="ECO:0000269" key="12">
    <source>
    </source>
</evidence>
<evidence type="ECO:0000269" key="13">
    <source>
    </source>
</evidence>
<evidence type="ECO:0000269" key="14">
    <source>
    </source>
</evidence>
<evidence type="ECO:0000269" key="15">
    <source>
    </source>
</evidence>
<evidence type="ECO:0000269" key="16">
    <source>
    </source>
</evidence>
<evidence type="ECO:0000305" key="17"/>
<evidence type="ECO:0007744" key="18">
    <source>
        <dbReference type="PDB" id="1UL1"/>
    </source>
</evidence>
<evidence type="ECO:0007744" key="19">
    <source>
        <dbReference type="PDB" id="5FV7"/>
    </source>
</evidence>
<evidence type="ECO:0007744" key="20">
    <source>
        <dbReference type="PDB" id="5ZOD"/>
    </source>
</evidence>
<evidence type="ECO:0007744" key="21">
    <source>
    </source>
</evidence>
<evidence type="ECO:0007744" key="22">
    <source>
    </source>
</evidence>
<evidence type="ECO:0007744" key="23">
    <source>
    </source>
</evidence>
<evidence type="ECO:0007829" key="24">
    <source>
        <dbReference type="PDB" id="1U7B"/>
    </source>
</evidence>
<evidence type="ECO:0007829" key="25">
    <source>
        <dbReference type="PDB" id="1UL1"/>
    </source>
</evidence>
<evidence type="ECO:0007829" key="26">
    <source>
        <dbReference type="PDB" id="5K97"/>
    </source>
</evidence>
<evidence type="ECO:0007829" key="27">
    <source>
        <dbReference type="PDB" id="5ZOD"/>
    </source>
</evidence>
<evidence type="ECO:0007829" key="28">
    <source>
        <dbReference type="PDB" id="5ZOE"/>
    </source>
</evidence>
<gene>
    <name evidence="1" type="primary">FEN1</name>
    <name type="synonym">RAD2</name>
</gene>
<comment type="function">
    <text evidence="1 3 5 7 10 12 14 15">Structure-specific nuclease with 5'-flap endonuclease and 5'-3' exonuclease activities involved in DNA replication and repair. During DNA replication, cleaves the 5'-overhanging flap structure that is generated by displacement synthesis when DNA polymerase encounters the 5'-end of a downstream Okazaki fragment. It enters the flap from the 5'-end and then tracks to cleave the flap base, leaving a nick for ligation. Also involved in the long patch base excision repair (LP-BER) pathway, by cleaving within the apurinic/apyrimidinic (AP) site-terminated flap. Acts as a genome stabilization factor that prevents flaps from equilibrating into structures that lead to duplications and deletions. Also possesses 5'-3' exonuclease activity on nicked or gapped double-stranded DNA, and exhibits RNase H activity. Also involved in replication and repair of rDNA and in repairing mitochondrial DNA.</text>
</comment>
<comment type="cofactor">
    <cofactor>
        <name>Mg(2+)</name>
        <dbReference type="ChEBI" id="CHEBI:18420"/>
    </cofactor>
    <text>Binds 2 magnesium ions per subunit. They probably participate in the reaction catalyzed by the enzyme. May bind an additional third magnesium ion after substrate binding.</text>
</comment>
<comment type="subunit">
    <text evidence="1 4 6 8 9 12 13 16">Interacts with PCNA (PubMed:11430825, PubMed:15616578, PubMed:26760506, PubMed:9305916). Three molecules of FEN1 bind to one PCNA trimer with each molecule binding to one PCNA monomer (PubMed:15616578). PCNA stimulates the nuclease activity without altering cleavage specificity (PubMed:15616578). The C-terminal domain binds EP300; can bind simultaneously to both PCNA and EP300 (PubMed:11430825). Interacts with DDX11; this interaction is direct and increases flap endonuclease activity of FEN1 (PubMed:18499658). Interacts with WDR4; regulating its endonuclease activity (PubMed:26751069). Interacts with POLB (PubMed:19336415, PubMed:26760506).</text>
</comment>
<comment type="interaction">
    <interactant intactId="EBI-707816">
        <id>P39748</id>
    </interactant>
    <interactant intactId="EBI-621372">
        <id>P54132</id>
        <label>BLM</label>
    </interactant>
    <organismsDiffer>false</organismsDiffer>
    <experiments>4</experiments>
</comment>
<comment type="interaction">
    <interactant intactId="EBI-707816">
        <id>P39748</id>
    </interactant>
    <interactant intactId="EBI-2370806">
        <id>Q96NY9</id>
        <label>MUS81</label>
    </interactant>
    <organismsDiffer>false</organismsDiffer>
    <experiments>5</experiments>
</comment>
<comment type="interaction">
    <interactant intactId="EBI-707816">
        <id>P39748</id>
    </interactant>
    <interactant intactId="EBI-358311">
        <id>P12004</id>
        <label>PCNA</label>
    </interactant>
    <organismsDiffer>false</organismsDiffer>
    <experiments>22</experiments>
</comment>
<comment type="interaction">
    <interactant intactId="EBI-707816">
        <id>P39748</id>
    </interactant>
    <interactant intactId="EBI-750427">
        <id>P57081</id>
        <label>WDR4</label>
    </interactant>
    <organismsDiffer>false</organismsDiffer>
    <experiments>8</experiments>
</comment>
<comment type="interaction">
    <interactant intactId="EBI-707816">
        <id>P39748</id>
    </interactant>
    <interactant intactId="EBI-368417">
        <id>Q14191</id>
        <label>WRN</label>
    </interactant>
    <organismsDiffer>false</organismsDiffer>
    <experiments>9</experiments>
</comment>
<comment type="subcellular location">
    <molecule>Isoform 1</molecule>
    <subcellularLocation>
        <location>Nucleus</location>
        <location>Nucleolus</location>
    </subcellularLocation>
    <subcellularLocation>
        <location>Nucleus</location>
        <location>Nucleoplasm</location>
    </subcellularLocation>
    <text>Resides mostly in the nucleoli and relocalizes to the nucleoplasm upon DNA damage.</text>
</comment>
<comment type="subcellular location">
    <molecule>Isoform FENMIT</molecule>
    <subcellularLocation>
        <location evidence="1 11">Mitochondrion</location>
    </subcellularLocation>
</comment>
<comment type="alternative products">
    <event type="alternative initiation"/>
    <isoform>
        <id>P39748-1</id>
        <name>1</name>
        <sequence type="displayed"/>
    </isoform>
    <isoform>
        <id>P39748-2</id>
        <name>FENMIT</name>
        <sequence type="described" ref="VSP_047520"/>
    </isoform>
</comment>
<comment type="PTM">
    <text evidence="1 4">Acetylated by EP300. Acetylation inhibits both endonuclease and exonuclease activity. Acetylation also reduces DNA-binding activity but does not affect interaction with PCNA or EP300.</text>
</comment>
<comment type="PTM">
    <text evidence="1 10">Phosphorylation upon DNA damage induces relocalization to the nuclear plasma. Phosphorylation at Ser-187 by CDK2 occurs during late S-phase and results in dissociation from PCNA.</text>
</comment>
<comment type="PTM">
    <text evidence="1 10">Methylation at Arg-192 by PRMT5 impedes Ser-187 phosphorylation and increases interaction with PCNA.</text>
</comment>
<comment type="miscellaneous">
    <molecule>Isoform FENMIT</molecule>
    <text evidence="17">No nuclease activity. Binds preferentially to RNA flap structures and R-loops.</text>
</comment>
<comment type="similarity">
    <text evidence="1">Belongs to the XPG/RAD2 endonuclease family. FEN1 subfamily.</text>
</comment>
<comment type="online information" name="Atlas of Genetics and Cytogenetics in Oncology and Haematology">
    <link uri="https://atlasgeneticsoncology.org/gene/40543/FEN1"/>
</comment>